<organism>
    <name type="scientific">Influenza A virus (strain A/Duck/England/1/1956 H11N6)</name>
    <dbReference type="NCBI Taxonomy" id="383550"/>
    <lineage>
        <taxon>Viruses</taxon>
        <taxon>Riboviria</taxon>
        <taxon>Orthornavirae</taxon>
        <taxon>Negarnaviricota</taxon>
        <taxon>Polyploviricotina</taxon>
        <taxon>Insthoviricetes</taxon>
        <taxon>Articulavirales</taxon>
        <taxon>Orthomyxoviridae</taxon>
        <taxon>Alphainfluenzavirus</taxon>
        <taxon>Alphainfluenzavirus influenzae</taxon>
        <taxon>Influenza A virus</taxon>
    </lineage>
</organism>
<protein>
    <recommendedName>
        <fullName evidence="1">Hemagglutinin</fullName>
    </recommendedName>
    <component>
        <recommendedName>
            <fullName evidence="1">Hemagglutinin HA1 chain</fullName>
        </recommendedName>
    </component>
    <component>
        <recommendedName>
            <fullName evidence="1">Hemagglutinin HA2 chain</fullName>
        </recommendedName>
    </component>
</protein>
<gene>
    <name evidence="1" type="primary">HA</name>
</gene>
<comment type="function">
    <text>Binds to sialic acid-containing receptors on the cell surface, bringing about the attachment of the virus particle to the cell. This attachment induces virion internalization of about two third of the virus particles through clathrin-dependent endocytosis and about one third through a clathrin- and caveolin-independent pathway. Plays a major role in the determination of host range restriction and virulence. Class I viral fusion protein. Responsible for penetration of the virus into the cell cytoplasm by mediating the fusion of the membrane of the endocytosed virus particle with the endosomal membrane. Low pH in endosomes induces an irreversible conformational change in HA2, releasing the fusion hydrophobic peptide. Several trimers are required to form a competent fusion pore.</text>
</comment>
<comment type="function">
    <text evidence="1">Binds to sialic acid-containing receptors on the cell surface, bringing about the attachment of the virus particle to the cell. This attachment induces virion internalization either through clathrin-dependent endocytosis or through clathrin- and caveolin-independent pathway. Plays a major role in the determination of host range restriction and virulence. Class I viral fusion protein. Responsible for penetration of the virus into the cell cytoplasm by mediating the fusion of the membrane of the endocytosed virus particle with the endosomal membrane. Low pH in endosomes induces an irreversible conformational change in HA2, releasing the fusion hydrophobic peptide. Several trimers are required to form a competent fusion pore.</text>
</comment>
<comment type="subunit">
    <text evidence="1">Homotrimer of disulfide-linked HA1-HA2.</text>
</comment>
<comment type="subcellular location">
    <subcellularLocation>
        <location evidence="1">Virion membrane</location>
        <topology evidence="1">Single-pass type I membrane protein</topology>
    </subcellularLocation>
    <subcellularLocation>
        <location evidence="1">Host apical cell membrane</location>
        <topology evidence="1">Single-pass type I membrane protein</topology>
    </subcellularLocation>
    <text evidence="1">Targeted to the apical plasma membrane in epithelial polarized cells through a signal present in the transmembrane domain. Associated with glycosphingolipid- and cholesterol-enriched detergent-resistant lipid rafts.</text>
</comment>
<comment type="PTM">
    <text evidence="1">Palmitoylated.</text>
</comment>
<comment type="PTM">
    <text evidence="1">In natural infection, inactive HA is matured into HA1 and HA2 outside the cell by one or more trypsin-like, arginine-specific endoprotease secreted by the bronchial epithelial cells. One identified protease that may be involved in this process is secreted in lungs by club cells.</text>
</comment>
<comment type="miscellaneous">
    <text>Major glycoprotein, comprises over 80% of the envelope proteins present in virus particle.</text>
</comment>
<comment type="miscellaneous">
    <text>The extent of infection into host organism is determined by HA. Influenza viruses bud from the apical surface of polarized epithelial cells (e.g. bronchial epithelial cells) into lumen of lungs and are therefore usually pneumotropic. The reason is that HA is cleaved by tryptase clara which is restricted to lungs. However, HAs of H5 and H7 pantropic avian viruses subtypes can be cleaved by furin and subtilisin-type enzymes, allowing the virus to grow in other organs than lungs.</text>
</comment>
<comment type="miscellaneous">
    <text evidence="2">The influenza A genome consist of 8 RNA segments. Genetic variation of hemagglutinin and/or neuraminidase genes results in the emergence of new influenza strains. The mechanism of variation can be the result of point mutations or the result of genetic reassortment between segments of two different strains.</text>
</comment>
<comment type="similarity">
    <text evidence="1">Belongs to the influenza viruses hemagglutinin family.</text>
</comment>
<dbReference type="EMBL" id="D90306">
    <property type="protein sequence ID" value="BAA14336.1"/>
    <property type="molecule type" value="Genomic_RNA"/>
</dbReference>
<dbReference type="EMBL" id="CY014679">
    <property type="protein sequence ID" value="ABI84545.1"/>
    <property type="molecule type" value="Genomic_RNA"/>
</dbReference>
<dbReference type="EMBL" id="J02107">
    <property type="protein sequence ID" value="AAA43183.1"/>
    <property type="molecule type" value="Genomic_RNA"/>
</dbReference>
<dbReference type="SMR" id="P04661"/>
<dbReference type="GlyCosmos" id="P04661">
    <property type="glycosylation" value="6 sites, No reported glycans"/>
</dbReference>
<dbReference type="PRO" id="PR:P04661"/>
<dbReference type="Proteomes" id="UP000155465">
    <property type="component" value="Genome"/>
</dbReference>
<dbReference type="GO" id="GO:0020002">
    <property type="term" value="C:host cell plasma membrane"/>
    <property type="evidence" value="ECO:0007669"/>
    <property type="project" value="UniProtKB-SubCell"/>
</dbReference>
<dbReference type="GO" id="GO:0016020">
    <property type="term" value="C:membrane"/>
    <property type="evidence" value="ECO:0007669"/>
    <property type="project" value="UniProtKB-UniRule"/>
</dbReference>
<dbReference type="GO" id="GO:0019031">
    <property type="term" value="C:viral envelope"/>
    <property type="evidence" value="ECO:0007669"/>
    <property type="project" value="UniProtKB-UniRule"/>
</dbReference>
<dbReference type="GO" id="GO:0055036">
    <property type="term" value="C:virion membrane"/>
    <property type="evidence" value="ECO:0007669"/>
    <property type="project" value="UniProtKB-SubCell"/>
</dbReference>
<dbReference type="GO" id="GO:0046789">
    <property type="term" value="F:host cell surface receptor binding"/>
    <property type="evidence" value="ECO:0007669"/>
    <property type="project" value="UniProtKB-UniRule"/>
</dbReference>
<dbReference type="GO" id="GO:0075512">
    <property type="term" value="P:clathrin-dependent endocytosis of virus by host cell"/>
    <property type="evidence" value="ECO:0007669"/>
    <property type="project" value="UniProtKB-UniRule"/>
</dbReference>
<dbReference type="GO" id="GO:0039654">
    <property type="term" value="P:fusion of virus membrane with host endosome membrane"/>
    <property type="evidence" value="ECO:0007669"/>
    <property type="project" value="UniProtKB-UniRule"/>
</dbReference>
<dbReference type="GO" id="GO:0019064">
    <property type="term" value="P:fusion of virus membrane with host plasma membrane"/>
    <property type="evidence" value="ECO:0007669"/>
    <property type="project" value="InterPro"/>
</dbReference>
<dbReference type="GO" id="GO:0046761">
    <property type="term" value="P:viral budding from plasma membrane"/>
    <property type="evidence" value="ECO:0007669"/>
    <property type="project" value="UniProtKB-UniRule"/>
</dbReference>
<dbReference type="GO" id="GO:0019062">
    <property type="term" value="P:virion attachment to host cell"/>
    <property type="evidence" value="ECO:0007669"/>
    <property type="project" value="UniProtKB-KW"/>
</dbReference>
<dbReference type="Gene3D" id="3.90.20.10">
    <property type="match status" value="1"/>
</dbReference>
<dbReference type="Gene3D" id="3.90.209.20">
    <property type="match status" value="1"/>
</dbReference>
<dbReference type="HAMAP" id="MF_04072">
    <property type="entry name" value="INFV_HEMA"/>
    <property type="match status" value="1"/>
</dbReference>
<dbReference type="InterPro" id="IPR008980">
    <property type="entry name" value="Capsid_hemagglutn"/>
</dbReference>
<dbReference type="InterPro" id="IPR013828">
    <property type="entry name" value="Hemagglutn_HA1_a/b_dom_sf"/>
</dbReference>
<dbReference type="InterPro" id="IPR000149">
    <property type="entry name" value="Hemagglutn_influenz_A"/>
</dbReference>
<dbReference type="InterPro" id="IPR001364">
    <property type="entry name" value="Hemagglutn_influenz_A/B"/>
</dbReference>
<dbReference type="Pfam" id="PF00509">
    <property type="entry name" value="Hemagglutinin"/>
    <property type="match status" value="1"/>
</dbReference>
<dbReference type="PRINTS" id="PR00330">
    <property type="entry name" value="HEMAGGLUTN1"/>
</dbReference>
<dbReference type="PRINTS" id="PR00329">
    <property type="entry name" value="HEMAGGLUTN12"/>
</dbReference>
<dbReference type="SUPFAM" id="SSF58064">
    <property type="entry name" value="Influenza hemagglutinin (stalk)"/>
    <property type="match status" value="1"/>
</dbReference>
<dbReference type="SUPFAM" id="SSF49818">
    <property type="entry name" value="Viral protein domain"/>
    <property type="match status" value="1"/>
</dbReference>
<accession>P04661</accession>
<accession>Q0A437</accession>
<reference key="1">
    <citation type="journal article" date="1991" name="Virology">
        <title>Comparison of complete amino acid sequences and receptor-binding properties among 13 serotypes of hemagglutinins of influenza A viruses.</title>
        <authorList>
            <person name="Nobusawa E."/>
            <person name="Aoyama T."/>
            <person name="Kato H."/>
            <person name="Suzuki Y."/>
            <person name="Tateno Y."/>
            <person name="Nakajima K."/>
        </authorList>
    </citation>
    <scope>NUCLEOTIDE SEQUENCE [GENOMIC RNA]</scope>
</reference>
<reference key="2">
    <citation type="journal article" date="2006" name="Science">
        <title>Large-scale sequence analysis of avian influenza isolates.</title>
        <authorList>
            <person name="Obenauer J.C."/>
            <person name="Denson J."/>
            <person name="Mehta P.K."/>
            <person name="Su X."/>
            <person name="Mukatira S."/>
            <person name="Finkelstein D.B."/>
            <person name="Xu X."/>
            <person name="Wang J."/>
            <person name="Ma J."/>
            <person name="Fan Y."/>
            <person name="Rakestraw K.M."/>
            <person name="Webster R.G."/>
            <person name="Hoffmann E."/>
            <person name="Krauss S."/>
            <person name="Zheng J."/>
            <person name="Zhang Z."/>
            <person name="Naeve C.W."/>
        </authorList>
    </citation>
    <scope>NUCLEOTIDE SEQUENCE [GENOMIC RNA]</scope>
</reference>
<reference key="3">
    <citation type="journal article" date="1981" name="Proc. Natl. Acad. Sci. U.S.A.">
        <title>Sequence relationships among the hemagglutinin genes of 12 subtypes of influenza A virus.</title>
        <authorList>
            <person name="Air G.M."/>
        </authorList>
    </citation>
    <scope>NUCLEOTIDE SEQUENCE [GENOMIC RNA] OF 1-83</scope>
</reference>
<feature type="signal peptide" evidence="1">
    <location>
        <begin position="1"/>
        <end position="16"/>
    </location>
</feature>
<feature type="chain" id="PRO_0000440390" description="Hemagglutinin" evidence="1">
    <location>
        <begin position="17"/>
        <end position="565"/>
    </location>
</feature>
<feature type="chain" id="PRO_0000038914" description="Hemagglutinin HA1 chain" evidence="1">
    <location>
        <begin position="17"/>
        <end position="341"/>
    </location>
</feature>
<feature type="chain" id="PRO_0000038915" description="Hemagglutinin HA2 chain" evidence="1">
    <location>
        <begin position="343"/>
        <end position="565"/>
    </location>
</feature>
<feature type="topological domain" description="Extracellular" evidence="1">
    <location>
        <begin position="17"/>
        <end position="531"/>
    </location>
</feature>
<feature type="transmembrane region" description="Helical" evidence="1">
    <location>
        <begin position="532"/>
        <end position="552"/>
    </location>
</feature>
<feature type="topological domain" description="Cytoplasmic" evidence="1">
    <location>
        <begin position="553"/>
        <end position="565"/>
    </location>
</feature>
<feature type="site" description="Cleavage; by host" evidence="1">
    <location>
        <begin position="342"/>
        <end position="343"/>
    </location>
</feature>
<feature type="lipid moiety-binding region" description="S-palmitoyl cysteine; by host" evidence="1">
    <location>
        <position position="554"/>
    </location>
</feature>
<feature type="lipid moiety-binding region" description="S-palmitoyl cysteine; by host" evidence="1">
    <location>
        <position position="561"/>
    </location>
</feature>
<feature type="lipid moiety-binding region" description="S-palmitoyl cysteine; by host" evidence="1">
    <location>
        <position position="564"/>
    </location>
</feature>
<feature type="glycosylation site" description="N-linked (GlcNAc...) asparagine; by host" evidence="1">
    <location>
        <position position="26"/>
    </location>
</feature>
<feature type="glycosylation site" description="N-linked (GlcNAc...) asparagine; by host" evidence="1">
    <location>
        <position position="27"/>
    </location>
</feature>
<feature type="glycosylation site" description="N-linked (GlcNAc...) asparagine; by host" evidence="1">
    <location>
        <position position="39"/>
    </location>
</feature>
<feature type="glycosylation site" description="N-linked (GlcNAc...) asparagine; by host" evidence="1">
    <location>
        <position position="181"/>
    </location>
</feature>
<feature type="glycosylation site" description="N-linked (GlcNAc...) asparagine; by host" evidence="1">
    <location>
        <position position="304"/>
    </location>
</feature>
<feature type="glycosylation site" description="N-linked (GlcNAc...) asparagine; by host" evidence="1">
    <location>
        <position position="496"/>
    </location>
</feature>
<feature type="disulfide bond" description="Interchain (between HA1 and HA2 chains)" evidence="1">
    <location>
        <begin position="20"/>
        <end position="479"/>
    </location>
</feature>
<feature type="disulfide bond" evidence="1">
    <location>
        <begin position="58"/>
        <end position="290"/>
    </location>
</feature>
<feature type="disulfide bond" evidence="1">
    <location>
        <begin position="71"/>
        <end position="83"/>
    </location>
</feature>
<feature type="disulfide bond" evidence="1">
    <location>
        <begin position="106"/>
        <end position="151"/>
    </location>
</feature>
<feature type="disulfide bond" evidence="1">
    <location>
        <begin position="294"/>
        <end position="318"/>
    </location>
</feature>
<feature type="disulfide bond" evidence="1">
    <location>
        <begin position="486"/>
        <end position="490"/>
    </location>
</feature>
<feature type="sequence conflict" description="In Ref. 3; AAA43183." evidence="2" ref="3">
    <original>T</original>
    <variation>I</variation>
    <location>
        <position position="4"/>
    </location>
</feature>
<feature type="sequence conflict" description="In Ref. 1; BAA14336." evidence="2" ref="1">
    <original>N</original>
    <variation>D</variation>
    <location>
        <position position="370"/>
    </location>
</feature>
<organismHost>
    <name type="scientific">Aves</name>
    <dbReference type="NCBI Taxonomy" id="8782"/>
</organismHost>
<proteinExistence type="inferred from homology"/>
<name>HEMA_I56A2</name>
<keyword id="KW-1167">Clathrin- and caveolin-independent endocytosis of virus by host</keyword>
<keyword id="KW-1165">Clathrin-mediated endocytosis of virus by host</keyword>
<keyword id="KW-1015">Disulfide bond</keyword>
<keyword id="KW-1170">Fusion of virus membrane with host endosomal membrane</keyword>
<keyword id="KW-1168">Fusion of virus membrane with host membrane</keyword>
<keyword id="KW-0325">Glycoprotein</keyword>
<keyword id="KW-0348">Hemagglutinin</keyword>
<keyword id="KW-1032">Host cell membrane</keyword>
<keyword id="KW-1043">Host membrane</keyword>
<keyword id="KW-0945">Host-virus interaction</keyword>
<keyword id="KW-0449">Lipoprotein</keyword>
<keyword id="KW-0472">Membrane</keyword>
<keyword id="KW-0564">Palmitate</keyword>
<keyword id="KW-0732">Signal</keyword>
<keyword id="KW-0812">Transmembrane</keyword>
<keyword id="KW-1133">Transmembrane helix</keyword>
<keyword id="KW-1161">Viral attachment to host cell</keyword>
<keyword id="KW-0261">Viral envelope protein</keyword>
<keyword id="KW-1162">Viral penetration into host cytoplasm</keyword>
<keyword id="KW-0946">Virion</keyword>
<keyword id="KW-1164">Virus endocytosis by host</keyword>
<keyword id="KW-1160">Virus entry into host cell</keyword>
<evidence type="ECO:0000255" key="1">
    <source>
        <dbReference type="HAMAP-Rule" id="MF_04072"/>
    </source>
</evidence>
<evidence type="ECO:0000305" key="2"/>
<sequence length="565" mass="63096">MEKTLLFAAIFLCVKADEICIGYLSNNSTDKVDTIIENNVTVTSSVELVETEHTGSFCSINGKQPISLGDCSFAGWILGNPMCDELIGKTSWSYIVEKPNPTNGICYPGTLESEEELRLKFSGVLEFNKFEVFTSNGWGAVNSGVGVTAACKFGGSNSFFRNMVWLIHQSGTYPVIKRTFNNTKGRDVLIVWGIHHPATLTEHQDLYKKDSSYVAVGSETYNRRFTPEINTRPRVNGQAGRMTFYWKIVKPGESITFESNGAFLAPRYAFEIVSVGNGKLFRSELNIESCSTKCQTEIGGINTNKSFHNVHRNTIGDCPKYVNVKSLKLATGPRNVPAIASRGLFGAIAGFIEGGWPGLINGWYGFQHRNEEGTGIAADKESTQKAIDQITSKVNNIVDRMNTNFESVQHEFSEIEERINQLSKHVDDSVVDIWSYNAQLLVLLENEKTLDLHDSNVRNLHEKVRRMLKDNAKDEGNGCFTFYHKCDNKCIERVRNGTYDHKEFEEESKINRQEIEGVKLDSSGNVYKILSIYSCIASSLVLAALIMGFMFWACSNGSCRCTICI</sequence>